<gene>
    <name type="primary">C16orf74</name>
</gene>
<evidence type="ECO:0000269" key="1">
    <source>
    </source>
</evidence>
<evidence type="ECO:0000303" key="2">
    <source>
    </source>
</evidence>
<evidence type="ECO:0000305" key="3"/>
<evidence type="ECO:0007744" key="4">
    <source>
    </source>
</evidence>
<organism>
    <name type="scientific">Homo sapiens</name>
    <name type="common">Human</name>
    <dbReference type="NCBI Taxonomy" id="9606"/>
    <lineage>
        <taxon>Eukaryota</taxon>
        <taxon>Metazoa</taxon>
        <taxon>Chordata</taxon>
        <taxon>Craniata</taxon>
        <taxon>Vertebrata</taxon>
        <taxon>Euteleostomi</taxon>
        <taxon>Mammalia</taxon>
        <taxon>Eutheria</taxon>
        <taxon>Euarchontoglires</taxon>
        <taxon>Primates</taxon>
        <taxon>Haplorrhini</taxon>
        <taxon>Catarrhini</taxon>
        <taxon>Hominidae</taxon>
        <taxon>Homo</taxon>
    </lineage>
</organism>
<proteinExistence type="evidence at protein level"/>
<sequence length="76" mass="8118">MGLKMSCLKGFQMCVSSSSSSHDEAPVLNDKHLDVPDIIITPPTPTGMMLPRDLGSTVWLDETGSCPDDGEIDPEA</sequence>
<name>CP074_HUMAN</name>
<keyword id="KW-0025">Alternative splicing</keyword>
<keyword id="KW-0597">Phosphoprotein</keyword>
<keyword id="KW-1267">Proteomics identification</keyword>
<keyword id="KW-1185">Reference proteome</keyword>
<accession>Q96GX8</accession>
<accession>R4GN89</accession>
<dbReference type="EMBL" id="AC123908">
    <property type="status" value="NOT_ANNOTATED_CDS"/>
    <property type="molecule type" value="Genomic_DNA"/>
</dbReference>
<dbReference type="EMBL" id="AC018695">
    <property type="status" value="NOT_ANNOTATED_CDS"/>
    <property type="molecule type" value="Genomic_DNA"/>
</dbReference>
<dbReference type="EMBL" id="AB115766">
    <property type="protein sequence ID" value="BAS02098.1"/>
    <property type="molecule type" value="mRNA"/>
</dbReference>
<dbReference type="EMBL" id="BC009078">
    <property type="status" value="NOT_ANNOTATED_CDS"/>
    <property type="molecule type" value="mRNA"/>
</dbReference>
<dbReference type="EMBL" id="BQ672221">
    <property type="status" value="NOT_ANNOTATED_CDS"/>
    <property type="molecule type" value="mRNA"/>
</dbReference>
<dbReference type="CCDS" id="CCDS45540.1">
    <molecule id="Q96GX8-1"/>
</dbReference>
<dbReference type="RefSeq" id="NP_996850.1">
    <molecule id="Q96GX8-1"/>
    <property type="nucleotide sequence ID" value="NM_206967.3"/>
</dbReference>
<dbReference type="BioGRID" id="135663">
    <property type="interactions" value="8"/>
</dbReference>
<dbReference type="FunCoup" id="Q96GX8">
    <property type="interactions" value="7"/>
</dbReference>
<dbReference type="IntAct" id="Q96GX8">
    <property type="interactions" value="6"/>
</dbReference>
<dbReference type="STRING" id="9606.ENSP00000284245"/>
<dbReference type="iPTMnet" id="Q96GX8"/>
<dbReference type="PhosphoSitePlus" id="Q96GX8"/>
<dbReference type="SwissPalm" id="Q96GX8"/>
<dbReference type="BioMuta" id="C16orf74"/>
<dbReference type="jPOST" id="Q96GX8"/>
<dbReference type="MassIVE" id="Q96GX8"/>
<dbReference type="PaxDb" id="9606-ENSP00000284245"/>
<dbReference type="PeptideAtlas" id="Q96GX8"/>
<dbReference type="ProteomicsDB" id="76680"/>
<dbReference type="Antibodypedia" id="63617">
    <property type="antibodies" value="5 antibodies from 5 providers"/>
</dbReference>
<dbReference type="DNASU" id="404550"/>
<dbReference type="Ensembl" id="ENST00000284245.9">
    <molecule id="Q96GX8-1"/>
    <property type="protein sequence ID" value="ENSP00000284245.3"/>
    <property type="gene ID" value="ENSG00000154102.11"/>
</dbReference>
<dbReference type="Ensembl" id="ENST00000602583.5">
    <molecule id="Q96GX8-2"/>
    <property type="protein sequence ID" value="ENSP00000473536.1"/>
    <property type="gene ID" value="ENSG00000154102.11"/>
</dbReference>
<dbReference type="GeneID" id="404550"/>
<dbReference type="KEGG" id="hsa:404550"/>
<dbReference type="MANE-Select" id="ENST00000284245.9">
    <property type="protein sequence ID" value="ENSP00000284245.3"/>
    <property type="RefSeq nucleotide sequence ID" value="NM_206967.3"/>
    <property type="RefSeq protein sequence ID" value="NP_996850.1"/>
</dbReference>
<dbReference type="UCSC" id="uc002fjc.5">
    <molecule id="Q96GX8-1"/>
    <property type="organism name" value="human"/>
</dbReference>
<dbReference type="AGR" id="HGNC:23362"/>
<dbReference type="CTD" id="404550"/>
<dbReference type="DisGeNET" id="404550"/>
<dbReference type="GeneCards" id="C16orf74"/>
<dbReference type="HGNC" id="HGNC:23362">
    <property type="gene designation" value="C16orf74"/>
</dbReference>
<dbReference type="HPA" id="ENSG00000154102">
    <property type="expression patterns" value="Tissue enhanced (retina)"/>
</dbReference>
<dbReference type="neXtProt" id="NX_Q96GX8"/>
<dbReference type="OpenTargets" id="ENSG00000154102"/>
<dbReference type="VEuPathDB" id="HostDB:ENSG00000154102"/>
<dbReference type="eggNOG" id="ENOG502SEPB">
    <property type="taxonomic scope" value="Eukaryota"/>
</dbReference>
<dbReference type="GeneTree" id="ENSGT00390000015933"/>
<dbReference type="HOGENOM" id="CLU_172665_0_0_1"/>
<dbReference type="InParanoid" id="Q96GX8"/>
<dbReference type="OMA" id="MCVSASG"/>
<dbReference type="OrthoDB" id="9451159at2759"/>
<dbReference type="PAN-GO" id="Q96GX8">
    <property type="GO annotations" value="0 GO annotations based on evolutionary models"/>
</dbReference>
<dbReference type="PhylomeDB" id="Q96GX8"/>
<dbReference type="TreeFam" id="TF338382"/>
<dbReference type="PathwayCommons" id="Q96GX8"/>
<dbReference type="SignaLink" id="Q96GX8"/>
<dbReference type="BioGRID-ORCS" id="404550">
    <property type="hits" value="15 hits in 1118 CRISPR screens"/>
</dbReference>
<dbReference type="ChiTaRS" id="C16orf74">
    <property type="organism name" value="human"/>
</dbReference>
<dbReference type="GenomeRNAi" id="404550"/>
<dbReference type="Pharos" id="Q96GX8">
    <property type="development level" value="Tdark"/>
</dbReference>
<dbReference type="PRO" id="PR:Q96GX8"/>
<dbReference type="Proteomes" id="UP000005640">
    <property type="component" value="Chromosome 16"/>
</dbReference>
<dbReference type="RNAct" id="Q96GX8">
    <property type="molecule type" value="protein"/>
</dbReference>
<dbReference type="Bgee" id="ENSG00000154102">
    <property type="expression patterns" value="Expressed in oocyte and 117 other cell types or tissues"/>
</dbReference>
<dbReference type="ExpressionAtlas" id="Q96GX8">
    <property type="expression patterns" value="baseline and differential"/>
</dbReference>
<dbReference type="InterPro" id="IPR027864">
    <property type="entry name" value="DUF4597"/>
</dbReference>
<dbReference type="PANTHER" id="PTHR37455">
    <property type="entry name" value="GENE, 27021-RELATED"/>
    <property type="match status" value="1"/>
</dbReference>
<dbReference type="PANTHER" id="PTHR37455:SF1">
    <property type="entry name" value="SIMILAR TO 1190005I06RIK PROTEIN"/>
    <property type="match status" value="1"/>
</dbReference>
<dbReference type="Pfam" id="PF15366">
    <property type="entry name" value="DUF4597"/>
    <property type="match status" value="1"/>
</dbReference>
<reference key="1">
    <citation type="submission" date="2003-07" db="EMBL/GenBank/DDBJ databases">
        <title>The immunoglobulin heavy chain repertoire of the urodele amphibian Pleurodeles waltl: identification of a new isotype.</title>
        <authorList>
            <person name="Schaerlinger B."/>
            <person name="Frippiat J.P."/>
        </authorList>
    </citation>
    <scope>NUCLEOTIDE SEQUENCE [GENOMIC DNA] (ISOFORM 2)</scope>
</reference>
<reference key="2">
    <citation type="journal article" date="2004" name="Nature">
        <title>The sequence and analysis of duplication-rich human chromosome 16.</title>
        <authorList>
            <person name="Martin J."/>
            <person name="Han C."/>
            <person name="Gordon L.A."/>
            <person name="Terry A."/>
            <person name="Prabhakar S."/>
            <person name="She X."/>
            <person name="Xie G."/>
            <person name="Hellsten U."/>
            <person name="Chan Y.M."/>
            <person name="Altherr M."/>
            <person name="Couronne O."/>
            <person name="Aerts A."/>
            <person name="Bajorek E."/>
            <person name="Black S."/>
            <person name="Blumer H."/>
            <person name="Branscomb E."/>
            <person name="Brown N.C."/>
            <person name="Bruno W.J."/>
            <person name="Buckingham J.M."/>
            <person name="Callen D.F."/>
            <person name="Campbell C.S."/>
            <person name="Campbell M.L."/>
            <person name="Campbell E.W."/>
            <person name="Caoile C."/>
            <person name="Challacombe J.F."/>
            <person name="Chasteen L.A."/>
            <person name="Chertkov O."/>
            <person name="Chi H.C."/>
            <person name="Christensen M."/>
            <person name="Clark L.M."/>
            <person name="Cohn J.D."/>
            <person name="Denys M."/>
            <person name="Detter J.C."/>
            <person name="Dickson M."/>
            <person name="Dimitrijevic-Bussod M."/>
            <person name="Escobar J."/>
            <person name="Fawcett J.J."/>
            <person name="Flowers D."/>
            <person name="Fotopulos D."/>
            <person name="Glavina T."/>
            <person name="Gomez M."/>
            <person name="Gonzales E."/>
            <person name="Goodstein D."/>
            <person name="Goodwin L.A."/>
            <person name="Grady D.L."/>
            <person name="Grigoriev I."/>
            <person name="Groza M."/>
            <person name="Hammon N."/>
            <person name="Hawkins T."/>
            <person name="Haydu L."/>
            <person name="Hildebrand C.E."/>
            <person name="Huang W."/>
            <person name="Israni S."/>
            <person name="Jett J."/>
            <person name="Jewett P.B."/>
            <person name="Kadner K."/>
            <person name="Kimball H."/>
            <person name="Kobayashi A."/>
            <person name="Krawczyk M.-C."/>
            <person name="Leyba T."/>
            <person name="Longmire J.L."/>
            <person name="Lopez F."/>
            <person name="Lou Y."/>
            <person name="Lowry S."/>
            <person name="Ludeman T."/>
            <person name="Manohar C.F."/>
            <person name="Mark G.A."/>
            <person name="McMurray K.L."/>
            <person name="Meincke L.J."/>
            <person name="Morgan J."/>
            <person name="Moyzis R.K."/>
            <person name="Mundt M.O."/>
            <person name="Munk A.C."/>
            <person name="Nandkeshwar R.D."/>
            <person name="Pitluck S."/>
            <person name="Pollard M."/>
            <person name="Predki P."/>
            <person name="Parson-Quintana B."/>
            <person name="Ramirez L."/>
            <person name="Rash S."/>
            <person name="Retterer J."/>
            <person name="Ricke D.O."/>
            <person name="Robinson D.L."/>
            <person name="Rodriguez A."/>
            <person name="Salamov A."/>
            <person name="Saunders E.H."/>
            <person name="Scott D."/>
            <person name="Shough T."/>
            <person name="Stallings R.L."/>
            <person name="Stalvey M."/>
            <person name="Sutherland R.D."/>
            <person name="Tapia R."/>
            <person name="Tesmer J.G."/>
            <person name="Thayer N."/>
            <person name="Thompson L.S."/>
            <person name="Tice H."/>
            <person name="Torney D.C."/>
            <person name="Tran-Gyamfi M."/>
            <person name="Tsai M."/>
            <person name="Ulanovsky L.E."/>
            <person name="Ustaszewska A."/>
            <person name="Vo N."/>
            <person name="White P.S."/>
            <person name="Williams A.L."/>
            <person name="Wills P.L."/>
            <person name="Wu J.-R."/>
            <person name="Wu K."/>
            <person name="Yang J."/>
            <person name="DeJong P."/>
            <person name="Bruce D."/>
            <person name="Doggett N.A."/>
            <person name="Deaven L."/>
            <person name="Schmutz J."/>
            <person name="Grimwood J."/>
            <person name="Richardson P."/>
            <person name="Rokhsar D.S."/>
            <person name="Eichler E.E."/>
            <person name="Gilna P."/>
            <person name="Lucas S.M."/>
            <person name="Myers R.M."/>
            <person name="Rubin E.M."/>
            <person name="Pennacchio L.A."/>
        </authorList>
    </citation>
    <scope>NUCLEOTIDE SEQUENCE [LARGE SCALE GENOMIC DNA]</scope>
</reference>
<reference key="3">
    <citation type="journal article" date="2004" name="Genome Res.">
        <title>The status, quality, and expansion of the NIH full-length cDNA project: the Mammalian Gene Collection (MGC).</title>
        <authorList>
            <consortium name="The MGC Project Team"/>
        </authorList>
    </citation>
    <scope>NUCLEOTIDE SEQUENCE [LARGE SCALE MRNA]</scope>
    <source>
        <tissue>Colon</tissue>
    </source>
</reference>
<reference key="4">
    <citation type="journal article" date="2008" name="Proc. Natl. Acad. Sci. U.S.A.">
        <title>A quantitative atlas of mitotic phosphorylation.</title>
        <authorList>
            <person name="Dephoure N."/>
            <person name="Zhou C."/>
            <person name="Villen J."/>
            <person name="Beausoleil S.A."/>
            <person name="Bakalarski C.E."/>
            <person name="Elledge S.J."/>
            <person name="Gygi S.P."/>
        </authorList>
    </citation>
    <scope>IDENTIFICATION BY MASS SPECTROMETRY [LARGE SCALE ANALYSIS] (ISOFORMS 1 AND 2)</scope>
    <scope>PHOSPHORYLATION [LARGE SCALE ANALYSIS] AT THR-44 AND THR-46</scope>
    <source>
        <tissue>Cervix carcinoma</tissue>
    </source>
</reference>
<reference key="5">
    <citation type="journal article" date="2010" name="Sci. Signal.">
        <title>Quantitative phosphoproteomics reveals widespread full phosphorylation site occupancy during mitosis.</title>
        <authorList>
            <person name="Olsen J.V."/>
            <person name="Vermeulen M."/>
            <person name="Santamaria A."/>
            <person name="Kumar C."/>
            <person name="Miller M.L."/>
            <person name="Jensen L.J."/>
            <person name="Gnad F."/>
            <person name="Cox J."/>
            <person name="Jensen T.S."/>
            <person name="Nigg E.A."/>
            <person name="Brunak S."/>
            <person name="Mann M."/>
        </authorList>
    </citation>
    <scope>IDENTIFICATION BY MASS SPECTROMETRY [LARGE SCALE ANALYSIS](ISOFORMS 1 AND 2)</scope>
    <source>
        <tissue>Cervix carcinoma</tissue>
    </source>
</reference>
<reference key="6">
    <citation type="journal article" date="2017" name="Oncotarget">
        <title>Overexpression of C16orf74 is involved in aggressive pancreatic cancers.</title>
        <authorList>
            <person name="Nakamura T."/>
            <person name="Katagiri T."/>
            <person name="Sato S."/>
            <person name="Kushibiki T."/>
            <person name="Hontani K."/>
            <person name="Tsuchikawa T."/>
            <person name="Hirano S."/>
            <person name="Nakamura Y."/>
        </authorList>
    </citation>
    <scope>INTERACTION WITH PPP3CA</scope>
    <scope>TISSUE SPECIFICITY (ISOFORMS 1 AND 2)</scope>
    <scope>PHOSPHORYLATION AT THR-44</scope>
    <scope>MUTAGENESIS OF 36-PRO--THR-41; THR-41 AND THR-44</scope>
</reference>
<comment type="subunit">
    <text evidence="1">Interacts (via PxIxIT motif, when phosphorylated on Thr-44) with PPP3CA.</text>
</comment>
<comment type="interaction">
    <interactant intactId="EBI-745814">
        <id>Q96GX8</id>
    </interactant>
    <interactant intactId="EBI-352922">
        <id>Q08209</id>
        <label>PPP3CA</label>
    </interactant>
    <organismsDiffer>false</organismsDiffer>
    <experiments>4</experiments>
</comment>
<comment type="interaction">
    <interactant intactId="EBI-745814">
        <id>Q96GX8</id>
    </interactant>
    <interactant intactId="EBI-11959013">
        <id>Q08209-2</id>
        <label>PPP3CA</label>
    </interactant>
    <organismsDiffer>false</organismsDiffer>
    <experiments>3</experiments>
</comment>
<comment type="interaction">
    <interactant intactId="EBI-745814">
        <id>Q96GX8</id>
    </interactant>
    <interactant intactId="EBI-711260">
        <id>Q13432</id>
        <label>UNC119</label>
    </interactant>
    <organismsDiffer>false</organismsDiffer>
    <experiments>7</experiments>
</comment>
<comment type="alternative products">
    <event type="alternative splicing"/>
    <isoform>
        <id>Q96GX8-1</id>
        <name>1</name>
        <name evidence="2">V1</name>
        <sequence type="displayed"/>
    </isoform>
    <isoform>
        <id>Q96GX8-2</id>
        <name>2</name>
        <name evidence="2">V3</name>
        <sequence type="described" ref="VSP_061477"/>
    </isoform>
</comment>
<comment type="tissue specificity">
    <molecule>Isoform 1</molecule>
    <text evidence="1">Not expressed in pancreatic duct cells (at protein level). Abundantly expressed in the pancreas and weakly expressed in the thyroid.</text>
</comment>
<comment type="tissue specificity">
    <molecule>Isoform 2</molecule>
    <text evidence="1">Not expressed in pancreatic duct cells (at protein level). Abundantly expressed in the lymph node and weakly expressed in the stomach, trachea and bone marrow.</text>
</comment>
<comment type="miscellaneous">
    <text evidence="1">May act as a prognostic marker of median survival time in pancreatic cancer patients.</text>
</comment>
<comment type="sequence caution" evidence="3">
    <conflict type="miscellaneous discrepancy">
        <sequence resource="EMBL" id="BC009078"/>
    </conflict>
    <text>Intron retention.</text>
</comment>
<protein>
    <recommendedName>
        <fullName>Uncharacterized protein C16orf74</fullName>
    </recommendedName>
</protein>
<feature type="chain" id="PRO_0000264621" description="Uncharacterized protein C16orf74">
    <location>
        <begin position="1"/>
        <end position="76"/>
    </location>
</feature>
<feature type="region of interest" description="Required for interaction with PPP3CA" evidence="1">
    <location>
        <begin position="36"/>
        <end position="41"/>
    </location>
</feature>
<feature type="modified residue" description="Phosphothreonine" evidence="1 4">
    <location>
        <position position="44"/>
    </location>
</feature>
<feature type="modified residue" description="Phosphothreonine" evidence="4">
    <location>
        <position position="46"/>
    </location>
</feature>
<feature type="splice variant" id="VSP_061477" description="In isoform 2.">
    <location>
        <begin position="1"/>
        <end position="12"/>
    </location>
</feature>
<feature type="mutagenesis site" description="Abolishes interaction with PPP3CA." evidence="1">
    <location>
        <begin position="36"/>
        <end position="41"/>
    </location>
</feature>
<feature type="mutagenesis site" description="No effect on phosphorylation." evidence="1">
    <original>T</original>
    <variation>A</variation>
    <location>
        <position position="41"/>
    </location>
</feature>
<feature type="mutagenesis site" description="Abolished phosphorylation and interaction with PPP3CA." evidence="1">
    <original>T</original>
    <variation>A</variation>
    <location>
        <position position="44"/>
    </location>
</feature>